<comment type="function">
    <text evidence="1">Excises uracil residues from the DNA which can arise as a result of misincorporation of dUMP residues by DNA polymerase or due to deamination of cytosine.</text>
</comment>
<comment type="catalytic activity">
    <reaction evidence="1">
        <text>Hydrolyzes single-stranded DNA or mismatched double-stranded DNA and polynucleotides, releasing free uracil.</text>
        <dbReference type="EC" id="3.2.2.27"/>
    </reaction>
</comment>
<comment type="subcellular location">
    <subcellularLocation>
        <location evidence="1">Cytoplasm</location>
    </subcellularLocation>
</comment>
<comment type="similarity">
    <text evidence="1">Belongs to the uracil-DNA glycosylase (UDG) superfamily. UNG family.</text>
</comment>
<evidence type="ECO:0000255" key="1">
    <source>
        <dbReference type="HAMAP-Rule" id="MF_00148"/>
    </source>
</evidence>
<accession>Q2NS03</accession>
<organism>
    <name type="scientific">Sodalis glossinidius (strain morsitans)</name>
    <dbReference type="NCBI Taxonomy" id="343509"/>
    <lineage>
        <taxon>Bacteria</taxon>
        <taxon>Pseudomonadati</taxon>
        <taxon>Pseudomonadota</taxon>
        <taxon>Gammaproteobacteria</taxon>
        <taxon>Enterobacterales</taxon>
        <taxon>Bruguierivoracaceae</taxon>
        <taxon>Sodalis</taxon>
    </lineage>
</organism>
<gene>
    <name evidence="1" type="primary">ung</name>
    <name type="ordered locus">SG1797</name>
</gene>
<reference key="1">
    <citation type="journal article" date="2006" name="Genome Res.">
        <title>Massive genome erosion and functional adaptations provide insights into the symbiotic lifestyle of Sodalis glossinidius in the tsetse host.</title>
        <authorList>
            <person name="Toh H."/>
            <person name="Weiss B.L."/>
            <person name="Perkin S.A.H."/>
            <person name="Yamashita A."/>
            <person name="Oshima K."/>
            <person name="Hattori M."/>
            <person name="Aksoy S."/>
        </authorList>
    </citation>
    <scope>NUCLEOTIDE SEQUENCE [LARGE SCALE GENOMIC DNA]</scope>
    <source>
        <strain>morsitans</strain>
    </source>
</reference>
<name>UNG_SODGM</name>
<proteinExistence type="inferred from homology"/>
<sequence>MTQMLTWRDALAQEKTLPYFQETLAFVARERAAGMTVYPPAKDVFNAFRFTELNAVKVVILGQDPYHGPNQAHGLSFSVKPGVPAPPSLVNIYKELASDIPGFVIPNHGCLQSWAQQGVMLLNTVLTVEAGKAHSHASLGWETFTDKVIKVLNAQREGIVFLLWGSHAQKKGTIIDPKRHHVLKAPHPSPLSAHRGFLGCRHFSRANALLEQQGQQPIDWTPTLPAA</sequence>
<protein>
    <recommendedName>
        <fullName evidence="1">Uracil-DNA glycosylase</fullName>
        <shortName evidence="1">UDG</shortName>
        <ecNumber evidence="1">3.2.2.27</ecNumber>
    </recommendedName>
</protein>
<keyword id="KW-0963">Cytoplasm</keyword>
<keyword id="KW-0227">DNA damage</keyword>
<keyword id="KW-0234">DNA repair</keyword>
<keyword id="KW-0378">Hydrolase</keyword>
<dbReference type="EC" id="3.2.2.27" evidence="1"/>
<dbReference type="EMBL" id="AP008232">
    <property type="protein sequence ID" value="BAE75072.1"/>
    <property type="molecule type" value="Genomic_DNA"/>
</dbReference>
<dbReference type="RefSeq" id="WP_011411621.1">
    <property type="nucleotide sequence ID" value="NC_007712.1"/>
</dbReference>
<dbReference type="SMR" id="Q2NS03"/>
<dbReference type="STRING" id="343509.SG1797"/>
<dbReference type="KEGG" id="sgl:SG1797"/>
<dbReference type="eggNOG" id="COG0692">
    <property type="taxonomic scope" value="Bacteria"/>
</dbReference>
<dbReference type="HOGENOM" id="CLU_032162_3_0_6"/>
<dbReference type="OrthoDB" id="9804372at2"/>
<dbReference type="Proteomes" id="UP000001932">
    <property type="component" value="Chromosome"/>
</dbReference>
<dbReference type="GO" id="GO:0005737">
    <property type="term" value="C:cytoplasm"/>
    <property type="evidence" value="ECO:0007669"/>
    <property type="project" value="UniProtKB-SubCell"/>
</dbReference>
<dbReference type="GO" id="GO:0004844">
    <property type="term" value="F:uracil DNA N-glycosylase activity"/>
    <property type="evidence" value="ECO:0007669"/>
    <property type="project" value="UniProtKB-UniRule"/>
</dbReference>
<dbReference type="GO" id="GO:0097510">
    <property type="term" value="P:base-excision repair, AP site formation via deaminated base removal"/>
    <property type="evidence" value="ECO:0007669"/>
    <property type="project" value="TreeGrafter"/>
</dbReference>
<dbReference type="CDD" id="cd10027">
    <property type="entry name" value="UDG-F1-like"/>
    <property type="match status" value="1"/>
</dbReference>
<dbReference type="FunFam" id="3.40.470.10:FF:000001">
    <property type="entry name" value="Uracil-DNA glycosylase"/>
    <property type="match status" value="1"/>
</dbReference>
<dbReference type="Gene3D" id="3.40.470.10">
    <property type="entry name" value="Uracil-DNA glycosylase-like domain"/>
    <property type="match status" value="1"/>
</dbReference>
<dbReference type="HAMAP" id="MF_00148">
    <property type="entry name" value="UDG"/>
    <property type="match status" value="1"/>
</dbReference>
<dbReference type="InterPro" id="IPR002043">
    <property type="entry name" value="UDG_fam1"/>
</dbReference>
<dbReference type="InterPro" id="IPR018085">
    <property type="entry name" value="Ura-DNA_Glyclase_AS"/>
</dbReference>
<dbReference type="InterPro" id="IPR005122">
    <property type="entry name" value="Uracil-DNA_glycosylase-like"/>
</dbReference>
<dbReference type="InterPro" id="IPR036895">
    <property type="entry name" value="Uracil-DNA_glycosylase-like_sf"/>
</dbReference>
<dbReference type="NCBIfam" id="NF003588">
    <property type="entry name" value="PRK05254.1-1"/>
    <property type="match status" value="1"/>
</dbReference>
<dbReference type="NCBIfam" id="NF003589">
    <property type="entry name" value="PRK05254.1-2"/>
    <property type="match status" value="1"/>
</dbReference>
<dbReference type="NCBIfam" id="NF003591">
    <property type="entry name" value="PRK05254.1-4"/>
    <property type="match status" value="1"/>
</dbReference>
<dbReference type="NCBIfam" id="NF003592">
    <property type="entry name" value="PRK05254.1-5"/>
    <property type="match status" value="1"/>
</dbReference>
<dbReference type="NCBIfam" id="TIGR00628">
    <property type="entry name" value="ung"/>
    <property type="match status" value="1"/>
</dbReference>
<dbReference type="PANTHER" id="PTHR11264">
    <property type="entry name" value="URACIL-DNA GLYCOSYLASE"/>
    <property type="match status" value="1"/>
</dbReference>
<dbReference type="PANTHER" id="PTHR11264:SF0">
    <property type="entry name" value="URACIL-DNA GLYCOSYLASE"/>
    <property type="match status" value="1"/>
</dbReference>
<dbReference type="Pfam" id="PF03167">
    <property type="entry name" value="UDG"/>
    <property type="match status" value="1"/>
</dbReference>
<dbReference type="SMART" id="SM00986">
    <property type="entry name" value="UDG"/>
    <property type="match status" value="1"/>
</dbReference>
<dbReference type="SMART" id="SM00987">
    <property type="entry name" value="UreE_C"/>
    <property type="match status" value="1"/>
</dbReference>
<dbReference type="SUPFAM" id="SSF52141">
    <property type="entry name" value="Uracil-DNA glycosylase-like"/>
    <property type="match status" value="1"/>
</dbReference>
<dbReference type="PROSITE" id="PS00130">
    <property type="entry name" value="U_DNA_GLYCOSYLASE"/>
    <property type="match status" value="1"/>
</dbReference>
<feature type="chain" id="PRO_1000009942" description="Uracil-DNA glycosylase">
    <location>
        <begin position="1"/>
        <end position="227"/>
    </location>
</feature>
<feature type="active site" description="Proton acceptor" evidence="1">
    <location>
        <position position="64"/>
    </location>
</feature>